<organism>
    <name type="scientific">Prochlorococcus marinus (strain MIT 9313)</name>
    <dbReference type="NCBI Taxonomy" id="74547"/>
    <lineage>
        <taxon>Bacteria</taxon>
        <taxon>Bacillati</taxon>
        <taxon>Cyanobacteriota</taxon>
        <taxon>Cyanophyceae</taxon>
        <taxon>Synechococcales</taxon>
        <taxon>Prochlorococcaceae</taxon>
        <taxon>Prochlorococcus</taxon>
    </lineage>
</organism>
<accession>Q7V5S5</accession>
<feature type="chain" id="PRO_0000368669" description="ATP synthase subunit b">
    <location>
        <begin position="1"/>
        <end position="172"/>
    </location>
</feature>
<feature type="transmembrane region" description="Helical" evidence="1">
    <location>
        <begin position="27"/>
        <end position="47"/>
    </location>
</feature>
<evidence type="ECO:0000255" key="1">
    <source>
        <dbReference type="HAMAP-Rule" id="MF_01398"/>
    </source>
</evidence>
<keyword id="KW-0066">ATP synthesis</keyword>
<keyword id="KW-0138">CF(0)</keyword>
<keyword id="KW-0375">Hydrogen ion transport</keyword>
<keyword id="KW-0406">Ion transport</keyword>
<keyword id="KW-0472">Membrane</keyword>
<keyword id="KW-1185">Reference proteome</keyword>
<keyword id="KW-0793">Thylakoid</keyword>
<keyword id="KW-0812">Transmembrane</keyword>
<keyword id="KW-1133">Transmembrane helix</keyword>
<keyword id="KW-0813">Transport</keyword>
<sequence>MISPLFFASEGGFGLNLDLFDANIVNLAIVIFGLYKFLPPFIGGILERRRVAIMADLQDSEDRLLKATEALAAAKKDLAAAHQKAEQIREDCKLRAEAIRLDSEKRTVEEMARVKQGATADLNAEASRASAQLRREAARMAIENALSALPGKLNTEAQSKLVSQSIKNLGEA</sequence>
<protein>
    <recommendedName>
        <fullName evidence="1">ATP synthase subunit b</fullName>
    </recommendedName>
    <alternativeName>
        <fullName evidence="1">ATP synthase F(0) sector subunit b</fullName>
    </alternativeName>
    <alternativeName>
        <fullName evidence="1">ATPase subunit I</fullName>
    </alternativeName>
    <alternativeName>
        <fullName evidence="1">F-type ATPase subunit b</fullName>
        <shortName evidence="1">F-ATPase subunit b</shortName>
    </alternativeName>
</protein>
<comment type="function">
    <text evidence="1">F(1)F(0) ATP synthase produces ATP from ADP in the presence of a proton or sodium gradient. F-type ATPases consist of two structural domains, F(1) containing the extramembraneous catalytic core and F(0) containing the membrane proton channel, linked together by a central stalk and a peripheral stalk. During catalysis, ATP synthesis in the catalytic domain of F(1) is coupled via a rotary mechanism of the central stalk subunits to proton translocation.</text>
</comment>
<comment type="function">
    <text evidence="1">Component of the F(0) channel, it forms part of the peripheral stalk, linking F(1) to F(0).</text>
</comment>
<comment type="subunit">
    <text evidence="1">F-type ATPases have 2 components, F(1) - the catalytic core - and F(0) - the membrane proton channel. F(1) has five subunits: alpha(3), beta(3), gamma(1), delta(1), epsilon(1). F(0) has four main subunits: a(1), b(1), b'(1) and c(10-14). The alpha and beta chains form an alternating ring which encloses part of the gamma chain. F(1) is attached to F(0) by a central stalk formed by the gamma and epsilon chains, while a peripheral stalk is formed by the delta, b and b' chains.</text>
</comment>
<comment type="subcellular location">
    <subcellularLocation>
        <location evidence="1">Cellular thylakoid membrane</location>
        <topology evidence="1">Single-pass membrane protein</topology>
    </subcellularLocation>
</comment>
<comment type="similarity">
    <text evidence="1">Belongs to the ATPase B chain family.</text>
</comment>
<gene>
    <name evidence="1" type="primary">atpF</name>
    <name type="ordered locus">PMT_1469</name>
</gene>
<reference key="1">
    <citation type="journal article" date="2003" name="Nature">
        <title>Genome divergence in two Prochlorococcus ecotypes reflects oceanic niche differentiation.</title>
        <authorList>
            <person name="Rocap G."/>
            <person name="Larimer F.W."/>
            <person name="Lamerdin J.E."/>
            <person name="Malfatti S."/>
            <person name="Chain P."/>
            <person name="Ahlgren N.A."/>
            <person name="Arellano A."/>
            <person name="Coleman M."/>
            <person name="Hauser L."/>
            <person name="Hess W.R."/>
            <person name="Johnson Z.I."/>
            <person name="Land M.L."/>
            <person name="Lindell D."/>
            <person name="Post A.F."/>
            <person name="Regala W."/>
            <person name="Shah M."/>
            <person name="Shaw S.L."/>
            <person name="Steglich C."/>
            <person name="Sullivan M.B."/>
            <person name="Ting C.S."/>
            <person name="Tolonen A."/>
            <person name="Webb E.A."/>
            <person name="Zinser E.R."/>
            <person name="Chisholm S.W."/>
        </authorList>
    </citation>
    <scope>NUCLEOTIDE SEQUENCE [LARGE SCALE GENOMIC DNA]</scope>
    <source>
        <strain>MIT 9313</strain>
    </source>
</reference>
<name>ATPF_PROMM</name>
<dbReference type="EMBL" id="BX548175">
    <property type="protein sequence ID" value="CAE21644.1"/>
    <property type="molecule type" value="Genomic_DNA"/>
</dbReference>
<dbReference type="RefSeq" id="WP_011130837.1">
    <property type="nucleotide sequence ID" value="NC_005071.1"/>
</dbReference>
<dbReference type="SMR" id="Q7V5S5"/>
<dbReference type="KEGG" id="pmt:PMT_1469"/>
<dbReference type="eggNOG" id="COG0711">
    <property type="taxonomic scope" value="Bacteria"/>
</dbReference>
<dbReference type="HOGENOM" id="CLU_079215_8_1_3"/>
<dbReference type="OrthoDB" id="461217at2"/>
<dbReference type="Proteomes" id="UP000001423">
    <property type="component" value="Chromosome"/>
</dbReference>
<dbReference type="GO" id="GO:0031676">
    <property type="term" value="C:plasma membrane-derived thylakoid membrane"/>
    <property type="evidence" value="ECO:0007669"/>
    <property type="project" value="UniProtKB-SubCell"/>
</dbReference>
<dbReference type="GO" id="GO:0045259">
    <property type="term" value="C:proton-transporting ATP synthase complex"/>
    <property type="evidence" value="ECO:0007669"/>
    <property type="project" value="UniProtKB-KW"/>
</dbReference>
<dbReference type="GO" id="GO:0046933">
    <property type="term" value="F:proton-transporting ATP synthase activity, rotational mechanism"/>
    <property type="evidence" value="ECO:0007669"/>
    <property type="project" value="UniProtKB-UniRule"/>
</dbReference>
<dbReference type="CDD" id="cd06503">
    <property type="entry name" value="ATP-synt_Fo_b"/>
    <property type="match status" value="1"/>
</dbReference>
<dbReference type="HAMAP" id="MF_01398">
    <property type="entry name" value="ATP_synth_b_bprime"/>
    <property type="match status" value="1"/>
</dbReference>
<dbReference type="InterPro" id="IPR002146">
    <property type="entry name" value="ATP_synth_b/b'su_bac/chlpt"/>
</dbReference>
<dbReference type="NCBIfam" id="NF005606">
    <property type="entry name" value="PRK07352.1"/>
    <property type="match status" value="1"/>
</dbReference>
<dbReference type="PANTHER" id="PTHR34264">
    <property type="entry name" value="ATP SYNTHASE SUBUNIT B, CHLOROPLASTIC"/>
    <property type="match status" value="1"/>
</dbReference>
<dbReference type="PANTHER" id="PTHR34264:SF3">
    <property type="entry name" value="ATP SYNTHASE SUBUNIT B, CHLOROPLASTIC"/>
    <property type="match status" value="1"/>
</dbReference>
<dbReference type="Pfam" id="PF00430">
    <property type="entry name" value="ATP-synt_B"/>
    <property type="match status" value="1"/>
</dbReference>
<proteinExistence type="inferred from homology"/>